<reference key="1">
    <citation type="submission" date="2009-01" db="EMBL/GenBank/DDBJ databases">
        <title>Complete sequence of Diaphorobacter sp. TPSY.</title>
        <authorList>
            <consortium name="US DOE Joint Genome Institute"/>
            <person name="Lucas S."/>
            <person name="Copeland A."/>
            <person name="Lapidus A."/>
            <person name="Glavina del Rio T."/>
            <person name="Tice H."/>
            <person name="Bruce D."/>
            <person name="Goodwin L."/>
            <person name="Pitluck S."/>
            <person name="Chertkov O."/>
            <person name="Brettin T."/>
            <person name="Detter J.C."/>
            <person name="Han C."/>
            <person name="Larimer F."/>
            <person name="Land M."/>
            <person name="Hauser L."/>
            <person name="Kyrpides N."/>
            <person name="Mikhailova N."/>
            <person name="Coates J.D."/>
        </authorList>
    </citation>
    <scope>NUCLEOTIDE SEQUENCE [LARGE SCALE GENOMIC DNA]</scope>
    <source>
        <strain>TPSY</strain>
    </source>
</reference>
<feature type="chain" id="PRO_1000190022" description="Methionyl-tRNA formyltransferase">
    <location>
        <begin position="1"/>
        <end position="323"/>
    </location>
</feature>
<feature type="binding site" evidence="1">
    <location>
        <begin position="117"/>
        <end position="120"/>
    </location>
    <ligand>
        <name>(6S)-5,6,7,8-tetrahydrofolate</name>
        <dbReference type="ChEBI" id="CHEBI:57453"/>
    </ligand>
</feature>
<proteinExistence type="inferred from homology"/>
<keyword id="KW-0648">Protein biosynthesis</keyword>
<keyword id="KW-1185">Reference proteome</keyword>
<keyword id="KW-0808">Transferase</keyword>
<accession>B9MI87</accession>
<comment type="function">
    <text evidence="1">Attaches a formyl group to the free amino group of methionyl-tRNA(fMet). The formyl group appears to play a dual role in the initiator identity of N-formylmethionyl-tRNA by promoting its recognition by IF2 and preventing the misappropriation of this tRNA by the elongation apparatus.</text>
</comment>
<comment type="catalytic activity">
    <reaction evidence="1">
        <text>L-methionyl-tRNA(fMet) + (6R)-10-formyltetrahydrofolate = N-formyl-L-methionyl-tRNA(fMet) + (6S)-5,6,7,8-tetrahydrofolate + H(+)</text>
        <dbReference type="Rhea" id="RHEA:24380"/>
        <dbReference type="Rhea" id="RHEA-COMP:9952"/>
        <dbReference type="Rhea" id="RHEA-COMP:9953"/>
        <dbReference type="ChEBI" id="CHEBI:15378"/>
        <dbReference type="ChEBI" id="CHEBI:57453"/>
        <dbReference type="ChEBI" id="CHEBI:78530"/>
        <dbReference type="ChEBI" id="CHEBI:78844"/>
        <dbReference type="ChEBI" id="CHEBI:195366"/>
        <dbReference type="EC" id="2.1.2.9"/>
    </reaction>
</comment>
<comment type="similarity">
    <text evidence="1">Belongs to the Fmt family.</text>
</comment>
<name>FMT_ACIET</name>
<protein>
    <recommendedName>
        <fullName evidence="1">Methionyl-tRNA formyltransferase</fullName>
        <ecNumber evidence="1">2.1.2.9</ecNumber>
    </recommendedName>
</protein>
<organism>
    <name type="scientific">Acidovorax ebreus (strain TPSY)</name>
    <name type="common">Diaphorobacter sp. (strain TPSY)</name>
    <dbReference type="NCBI Taxonomy" id="535289"/>
    <lineage>
        <taxon>Bacteria</taxon>
        <taxon>Pseudomonadati</taxon>
        <taxon>Pseudomonadota</taxon>
        <taxon>Betaproteobacteria</taxon>
        <taxon>Burkholderiales</taxon>
        <taxon>Comamonadaceae</taxon>
        <taxon>Diaphorobacter</taxon>
    </lineage>
</organism>
<gene>
    <name evidence="1" type="primary">fmt</name>
    <name type="ordered locus">Dtpsy_3398</name>
</gene>
<dbReference type="EC" id="2.1.2.9" evidence="1"/>
<dbReference type="EMBL" id="CP001392">
    <property type="protein sequence ID" value="ACM34825.1"/>
    <property type="molecule type" value="Genomic_DNA"/>
</dbReference>
<dbReference type="RefSeq" id="WP_015914611.1">
    <property type="nucleotide sequence ID" value="NC_011992.1"/>
</dbReference>
<dbReference type="SMR" id="B9MI87"/>
<dbReference type="KEGG" id="dia:Dtpsy_3398"/>
<dbReference type="eggNOG" id="COG0223">
    <property type="taxonomic scope" value="Bacteria"/>
</dbReference>
<dbReference type="HOGENOM" id="CLU_033347_1_2_4"/>
<dbReference type="Proteomes" id="UP000000450">
    <property type="component" value="Chromosome"/>
</dbReference>
<dbReference type="GO" id="GO:0005829">
    <property type="term" value="C:cytosol"/>
    <property type="evidence" value="ECO:0007669"/>
    <property type="project" value="TreeGrafter"/>
</dbReference>
<dbReference type="GO" id="GO:0004479">
    <property type="term" value="F:methionyl-tRNA formyltransferase activity"/>
    <property type="evidence" value="ECO:0007669"/>
    <property type="project" value="UniProtKB-UniRule"/>
</dbReference>
<dbReference type="CDD" id="cd08646">
    <property type="entry name" value="FMT_core_Met-tRNA-FMT_N"/>
    <property type="match status" value="1"/>
</dbReference>
<dbReference type="CDD" id="cd08704">
    <property type="entry name" value="Met_tRNA_FMT_C"/>
    <property type="match status" value="1"/>
</dbReference>
<dbReference type="FunFam" id="3.40.50.12230:FF:000001">
    <property type="entry name" value="Methionyl-tRNA formyltransferase"/>
    <property type="match status" value="1"/>
</dbReference>
<dbReference type="Gene3D" id="3.10.25.10">
    <property type="entry name" value="Formyl transferase, C-terminal domain"/>
    <property type="match status" value="1"/>
</dbReference>
<dbReference type="Gene3D" id="3.40.50.170">
    <property type="entry name" value="Formyl transferase, N-terminal domain"/>
    <property type="match status" value="1"/>
</dbReference>
<dbReference type="HAMAP" id="MF_00182">
    <property type="entry name" value="Formyl_trans"/>
    <property type="match status" value="1"/>
</dbReference>
<dbReference type="InterPro" id="IPR005794">
    <property type="entry name" value="Fmt"/>
</dbReference>
<dbReference type="InterPro" id="IPR005793">
    <property type="entry name" value="Formyl_trans_C"/>
</dbReference>
<dbReference type="InterPro" id="IPR037022">
    <property type="entry name" value="Formyl_trans_C_sf"/>
</dbReference>
<dbReference type="InterPro" id="IPR002376">
    <property type="entry name" value="Formyl_transf_N"/>
</dbReference>
<dbReference type="InterPro" id="IPR036477">
    <property type="entry name" value="Formyl_transf_N_sf"/>
</dbReference>
<dbReference type="InterPro" id="IPR011034">
    <property type="entry name" value="Formyl_transferase-like_C_sf"/>
</dbReference>
<dbReference type="InterPro" id="IPR001555">
    <property type="entry name" value="GART_AS"/>
</dbReference>
<dbReference type="InterPro" id="IPR044135">
    <property type="entry name" value="Met-tRNA-FMT_C"/>
</dbReference>
<dbReference type="InterPro" id="IPR041711">
    <property type="entry name" value="Met-tRNA-FMT_N"/>
</dbReference>
<dbReference type="NCBIfam" id="TIGR00460">
    <property type="entry name" value="fmt"/>
    <property type="match status" value="1"/>
</dbReference>
<dbReference type="PANTHER" id="PTHR11138">
    <property type="entry name" value="METHIONYL-TRNA FORMYLTRANSFERASE"/>
    <property type="match status" value="1"/>
</dbReference>
<dbReference type="PANTHER" id="PTHR11138:SF5">
    <property type="entry name" value="METHIONYL-TRNA FORMYLTRANSFERASE, MITOCHONDRIAL"/>
    <property type="match status" value="1"/>
</dbReference>
<dbReference type="Pfam" id="PF02911">
    <property type="entry name" value="Formyl_trans_C"/>
    <property type="match status" value="1"/>
</dbReference>
<dbReference type="Pfam" id="PF00551">
    <property type="entry name" value="Formyl_trans_N"/>
    <property type="match status" value="1"/>
</dbReference>
<dbReference type="SUPFAM" id="SSF50486">
    <property type="entry name" value="FMT C-terminal domain-like"/>
    <property type="match status" value="1"/>
</dbReference>
<dbReference type="SUPFAM" id="SSF53328">
    <property type="entry name" value="Formyltransferase"/>
    <property type="match status" value="1"/>
</dbReference>
<dbReference type="PROSITE" id="PS00373">
    <property type="entry name" value="GART"/>
    <property type="match status" value="1"/>
</dbReference>
<evidence type="ECO:0000255" key="1">
    <source>
        <dbReference type="HAMAP-Rule" id="MF_00182"/>
    </source>
</evidence>
<sequence>MRVIFAGTPEFARVALERLLTAGFTVPLVLTQPDRPAGRGMKLQASPVKQCALQHGIAVAQPLSLRLDGKYPEDAAAAKAAIEAAQADVMVVAAYGLILPQWVLNTPRLGCLNIHASLLPRWRGAAPIHRAIEAGDAETGVTIMQMDAGLDTGDMLLLEKTAISPADTTATLHDRLAQLGGRLIVEALEMAACGGLKPTPQPAEGVTYAHKIDKAESTIDWNQPAEVIARRVRAFDPFPGAATTLGADAIKVWSCEIDSCSRTLDAACGQILSIDADGIGVACGAGSLLRLTVLQRAGGKRLPAADFLRGFPLAPGMVLGAAP</sequence>